<reference key="1">
    <citation type="journal article" date="2009" name="Genome Res.">
        <title>Genome structure of a Saccharomyces cerevisiae strain widely used in bioethanol production.</title>
        <authorList>
            <person name="Argueso J.L."/>
            <person name="Carazzolle M.F."/>
            <person name="Mieczkowski P.A."/>
            <person name="Duarte F.M."/>
            <person name="Netto O.V.C."/>
            <person name="Missawa S.K."/>
            <person name="Galzerani F."/>
            <person name="Costa G.G.L."/>
            <person name="Vidal R.O."/>
            <person name="Noronha M.F."/>
            <person name="Dominska M."/>
            <person name="Andrietta M.G.S."/>
            <person name="Andrietta S.R."/>
            <person name="Cunha A.F."/>
            <person name="Gomes L.H."/>
            <person name="Tavares F.C.A."/>
            <person name="Alcarde A.R."/>
            <person name="Dietrich F.S."/>
            <person name="McCusker J.H."/>
            <person name="Petes T.D."/>
            <person name="Pereira G.A.G."/>
        </authorList>
    </citation>
    <scope>NUCLEOTIDE SEQUENCE [LARGE SCALE GENOMIC DNA]</scope>
    <source>
        <strain>JAY291</strain>
    </source>
</reference>
<accession>C7GQE4</accession>
<proteinExistence type="inferred from homology"/>
<organism>
    <name type="scientific">Saccharomyces cerevisiae (strain JAY291)</name>
    <name type="common">Baker's yeast</name>
    <dbReference type="NCBI Taxonomy" id="574961"/>
    <lineage>
        <taxon>Eukaryota</taxon>
        <taxon>Fungi</taxon>
        <taxon>Dikarya</taxon>
        <taxon>Ascomycota</taxon>
        <taxon>Saccharomycotina</taxon>
        <taxon>Saccharomycetes</taxon>
        <taxon>Saccharomycetales</taxon>
        <taxon>Saccharomycetaceae</taxon>
        <taxon>Saccharomyces</taxon>
    </lineage>
</organism>
<comment type="function">
    <text evidence="1">Involved in sporulation and maintenance of the mitochondrial DNA. Is probably involved in a pathway contributing to genomic integrity (By similarity).</text>
</comment>
<comment type="similarity">
    <text evidence="2">Belongs to the IRC19 family.</text>
</comment>
<feature type="chain" id="PRO_0000399064" description="Increased recombination centers protein 19">
    <location>
        <begin position="1"/>
        <end position="230"/>
    </location>
</feature>
<sequence length="230" mass="27392">MRKPSITITTAKAIITPDYTLIKSHSKYQLPSRFQKLDADSPERSTVVKLFYRRFMRLKPFISNVKMVKDTYRDYVRYKFMKENYELKRYLVFNPDGLRSKIKLELLSNTKCCERILPVTEMQRTLEFVLKSCSYLPETKVQKWDIARDNTYCRQILKNLLTMQYEKYRSILHRGIGHDELDVKFSHLKTTSSPLTKLNKTEKKKIPLFKVFSDFDTTLIYLNETLGTRL</sequence>
<dbReference type="EMBL" id="ACFL01000118">
    <property type="protein sequence ID" value="EEU06980.1"/>
    <property type="molecule type" value="Genomic_DNA"/>
</dbReference>
<dbReference type="Proteomes" id="UP000008073">
    <property type="component" value="Unassembled WGS sequence"/>
</dbReference>
<dbReference type="GO" id="GO:0030437">
    <property type="term" value="P:ascospore formation"/>
    <property type="evidence" value="ECO:0007669"/>
    <property type="project" value="InterPro"/>
</dbReference>
<dbReference type="InterPro" id="IPR016613">
    <property type="entry name" value="Irc19"/>
</dbReference>
<dbReference type="PIRSF" id="PIRSF013329">
    <property type="entry name" value="UCP013329"/>
    <property type="match status" value="1"/>
</dbReference>
<evidence type="ECO:0000250" key="1"/>
<evidence type="ECO:0000305" key="2"/>
<keyword id="KW-0749">Sporulation</keyword>
<name>IRC19_YEAS2</name>
<protein>
    <recommendedName>
        <fullName>Increased recombination centers protein 19</fullName>
    </recommendedName>
</protein>
<gene>
    <name type="primary">IRC19</name>
    <name type="synonym">RRG4</name>
    <name type="ORF">C1Q_02546</name>
</gene>